<dbReference type="EC" id="2.7.-.-"/>
<dbReference type="EMBL" id="CR931712">
    <property type="protein sequence ID" value="CAI34452.1"/>
    <property type="molecule type" value="Genomic_DNA"/>
</dbReference>
<dbReference type="SMR" id="Q4JZ13"/>
<dbReference type="GO" id="GO:0016772">
    <property type="term" value="F:transferase activity, transferring phosphorus-containing groups"/>
    <property type="evidence" value="ECO:0007669"/>
    <property type="project" value="InterPro"/>
</dbReference>
<dbReference type="GO" id="GO:0000271">
    <property type="term" value="P:polysaccharide biosynthetic process"/>
    <property type="evidence" value="ECO:0007669"/>
    <property type="project" value="UniProtKB-KW"/>
</dbReference>
<dbReference type="InterPro" id="IPR047141">
    <property type="entry name" value="Stealth"/>
</dbReference>
<dbReference type="InterPro" id="IPR021520">
    <property type="entry name" value="Stealth_CR2"/>
</dbReference>
<dbReference type="InterPro" id="IPR031356">
    <property type="entry name" value="Stealth_CR4"/>
</dbReference>
<dbReference type="PANTHER" id="PTHR24045">
    <property type="match status" value="1"/>
</dbReference>
<dbReference type="PANTHER" id="PTHR24045:SF0">
    <property type="entry name" value="N-ACETYLGLUCOSAMINE-1-PHOSPHOTRANSFERASE SUBUNITS ALPHA_BETA"/>
    <property type="match status" value="1"/>
</dbReference>
<dbReference type="Pfam" id="PF11380">
    <property type="entry name" value="Stealth_CR2"/>
    <property type="match status" value="1"/>
</dbReference>
<dbReference type="Pfam" id="PF17103">
    <property type="entry name" value="Stealth_CR4"/>
    <property type="match status" value="1"/>
</dbReference>
<organism>
    <name type="scientific">Streptococcus pneumoniae</name>
    <dbReference type="NCBI Taxonomy" id="1313"/>
    <lineage>
        <taxon>Bacteria</taxon>
        <taxon>Bacillati</taxon>
        <taxon>Bacillota</taxon>
        <taxon>Bacilli</taxon>
        <taxon>Lactobacillales</taxon>
        <taxon>Streptococcaceae</taxon>
        <taxon>Streptococcus</taxon>
    </lineage>
</organism>
<protein>
    <recommendedName>
        <fullName>Capsular polysaccharide phosphotransferase WcwK</fullName>
        <ecNumber>2.7.-.-</ecNumber>
    </recommendedName>
    <alternativeName>
        <fullName>Stealth protein WcwK</fullName>
    </alternativeName>
</protein>
<gene>
    <name type="primary">wcwK</name>
    <name type="ORF">SPC40_0011</name>
</gene>
<reference key="1">
    <citation type="journal article" date="2006" name="PLoS Genet.">
        <title>Genetic analysis of the capsular biosynthetic locus from all 90 pneumococcal serotypes.</title>
        <authorList>
            <person name="Bentley S.D."/>
            <person name="Aanensen D.M."/>
            <person name="Mavroidi A."/>
            <person name="Saunders D."/>
            <person name="Rabbinowitsch E."/>
            <person name="Collins M."/>
            <person name="Donohoe K."/>
            <person name="Harris D."/>
            <person name="Murphy L."/>
            <person name="Quail M.A."/>
            <person name="Samuel G."/>
            <person name="Skovsted I.C."/>
            <person name="Kaltoft M.S."/>
            <person name="Barrell B."/>
            <person name="Reeves P.R."/>
            <person name="Parkhill J."/>
            <person name="Spratt B.G."/>
        </authorList>
    </citation>
    <scope>NUCLEOTIDE SEQUENCE [GENOMIC DNA]</scope>
    <source>
        <strain>Colemore / Serotype 40</strain>
    </source>
</reference>
<reference key="2">
    <citation type="journal article" date="2005" name="PLoS Comput. Biol.">
        <title>Stealth proteins: in silico identification of a novel protein family rendering bacterial pathogens invisible to host immune defense.</title>
        <authorList>
            <person name="Sperisen P."/>
            <person name="Schmid C.D."/>
            <person name="Bucher P."/>
            <person name="Zilian O."/>
        </authorList>
    </citation>
    <scope>IDENTIFICATION AS A STEALTH PROTEIN</scope>
    <scope>PREDICTION OF FUNCTION</scope>
</reference>
<proteinExistence type="inferred from homology"/>
<accession>Q4JZ13</accession>
<feature type="chain" id="PRO_0000235967" description="Capsular polysaccharide phosphotransferase WcwK">
    <location>
        <begin position="1"/>
        <end position="335"/>
    </location>
</feature>
<name>WCWK1_STREE</name>
<evidence type="ECO:0000305" key="1"/>
<keyword id="KW-0270">Exopolysaccharide synthesis</keyword>
<keyword id="KW-0808">Transferase</keyword>
<comment type="miscellaneous">
    <text>Stealth proteins are part of a protein family that is conserved from bacteria to higher eukaryotes. Family members were first identified in microbes as proteins that help pathogens to elude the host innate immune system. Microbial stealth proteins are involved in the biosynthesis of exopolysaccharides. Stealth proteins are predicted to function as hexose-1-phosphoryltransferases.</text>
</comment>
<comment type="similarity">
    <text evidence="1">Belongs to the stealth family.</text>
</comment>
<sequence length="335" mass="40450">MKNMEQIDFVVTWVNNKDVDWCKRKSEFEKEYNIFQDLNSEERYREWGFMKYWFRAVEKYAPWVNKIYFITEGHVPNWLDVNHPKLVHVKHEDYIEKQFLPTFNSNVIEMNLIHLKDLSEKFVLFNDDTFINDFVKQSDFFENNLPKDTGIFSPLIPRENSLTPIVLNNMEIINKYFSKKKILEQNFSKFFNIKYGKHLLKNICLLPWSDLLGFYNSHIPVSYCKSNFLEVYEKEYDIFNLTFKNKFRNKNEINHWLIRYWQLSSGNFIPRNINFGKNYAISNDPTDIINELKFSKYKIICINDGESIDSFDEVKDLMIDAFEKKFPEKSSFEKK</sequence>